<comment type="function">
    <text evidence="1">One of the primary rRNA binding proteins, it binds directly to 16S rRNA where it nucleates assembly of the head domain of the 30S subunit.</text>
</comment>
<comment type="subunit">
    <text>Part of the 30S ribosomal subunit.</text>
</comment>
<comment type="subcellular location">
    <subcellularLocation>
        <location>Plastid</location>
        <location>Chloroplast</location>
    </subcellularLocation>
</comment>
<comment type="similarity">
    <text evidence="2">Belongs to the universal ribosomal protein uS7 family.</text>
</comment>
<sequence length="155" mass="17347">MSRRGTAEEKTAKSDPIYRNRLVNMLVNRILKHGKKSLAYQIVYQAVKKIQQKTETNPLSVLRQAICRVTPDIAVKARRVGGSTHQVPIEIGSTQGKALAIRWLLGASRKRPGRNMAFKLSSELVDAAKGSGDAIRKKEETHRMAEANRAFAHFR</sequence>
<geneLocation type="chloroplast"/>
<proteinExistence type="inferred from homology"/>
<accession>Q9GFM6</accession>
<feature type="chain" id="PRO_0000124437" description="Small ribosomal subunit protein uS7c">
    <location>
        <begin position="1"/>
        <end position="155"/>
    </location>
</feature>
<reference key="1">
    <citation type="journal article" date="2000" name="Am. J. Bot.">
        <title>Utility of 17 chloroplast genes for inferring the phylogeny of the basal angiosperms.</title>
        <authorList>
            <person name="Graham S.W."/>
            <person name="Olmstead R.G."/>
        </authorList>
    </citation>
    <scope>NUCLEOTIDE SEQUENCE [GENOMIC DNA]</scope>
</reference>
<gene>
    <name type="primary">rps7</name>
</gene>
<name>RR7_CALFL</name>
<keyword id="KW-0150">Chloroplast</keyword>
<keyword id="KW-0934">Plastid</keyword>
<keyword id="KW-0687">Ribonucleoprotein</keyword>
<keyword id="KW-0689">Ribosomal protein</keyword>
<keyword id="KW-0694">RNA-binding</keyword>
<keyword id="KW-0699">rRNA-binding</keyword>
<organism>
    <name type="scientific">Calycanthus floridus</name>
    <name type="common">Eastern sweetshrub</name>
    <dbReference type="NCBI Taxonomy" id="3429"/>
    <lineage>
        <taxon>Eukaryota</taxon>
        <taxon>Viridiplantae</taxon>
        <taxon>Streptophyta</taxon>
        <taxon>Embryophyta</taxon>
        <taxon>Tracheophyta</taxon>
        <taxon>Spermatophyta</taxon>
        <taxon>Magnoliopsida</taxon>
        <taxon>Magnoliidae</taxon>
        <taxon>Laurales</taxon>
        <taxon>Calycanthaceae</taxon>
        <taxon>Calycanthus</taxon>
    </lineage>
</organism>
<protein>
    <recommendedName>
        <fullName evidence="2">Small ribosomal subunit protein uS7c</fullName>
    </recommendedName>
    <alternativeName>
        <fullName>30S ribosomal protein S7, chloroplastic</fullName>
    </alternativeName>
</protein>
<evidence type="ECO:0000250" key="1"/>
<evidence type="ECO:0000305" key="2"/>
<dbReference type="EMBL" id="AF123774">
    <property type="protein sequence ID" value="AAG26101.1"/>
    <property type="molecule type" value="Genomic_DNA"/>
</dbReference>
<dbReference type="SMR" id="Q9GFM6"/>
<dbReference type="GO" id="GO:0009507">
    <property type="term" value="C:chloroplast"/>
    <property type="evidence" value="ECO:0007669"/>
    <property type="project" value="UniProtKB-SubCell"/>
</dbReference>
<dbReference type="GO" id="GO:0015935">
    <property type="term" value="C:small ribosomal subunit"/>
    <property type="evidence" value="ECO:0007669"/>
    <property type="project" value="InterPro"/>
</dbReference>
<dbReference type="GO" id="GO:0019843">
    <property type="term" value="F:rRNA binding"/>
    <property type="evidence" value="ECO:0007669"/>
    <property type="project" value="UniProtKB-UniRule"/>
</dbReference>
<dbReference type="GO" id="GO:0003735">
    <property type="term" value="F:structural constituent of ribosome"/>
    <property type="evidence" value="ECO:0007669"/>
    <property type="project" value="InterPro"/>
</dbReference>
<dbReference type="GO" id="GO:0006412">
    <property type="term" value="P:translation"/>
    <property type="evidence" value="ECO:0007669"/>
    <property type="project" value="UniProtKB-UniRule"/>
</dbReference>
<dbReference type="CDD" id="cd14871">
    <property type="entry name" value="uS7_Chloroplast"/>
    <property type="match status" value="1"/>
</dbReference>
<dbReference type="FunFam" id="1.10.455.10:FF:000001">
    <property type="entry name" value="30S ribosomal protein S7"/>
    <property type="match status" value="1"/>
</dbReference>
<dbReference type="Gene3D" id="1.10.455.10">
    <property type="entry name" value="Ribosomal protein S7 domain"/>
    <property type="match status" value="1"/>
</dbReference>
<dbReference type="HAMAP" id="MF_00480_B">
    <property type="entry name" value="Ribosomal_uS7_B"/>
    <property type="match status" value="1"/>
</dbReference>
<dbReference type="InterPro" id="IPR000235">
    <property type="entry name" value="Ribosomal_uS7"/>
</dbReference>
<dbReference type="InterPro" id="IPR005717">
    <property type="entry name" value="Ribosomal_uS7_bac/org-type"/>
</dbReference>
<dbReference type="InterPro" id="IPR020606">
    <property type="entry name" value="Ribosomal_uS7_CS"/>
</dbReference>
<dbReference type="InterPro" id="IPR023798">
    <property type="entry name" value="Ribosomal_uS7_dom"/>
</dbReference>
<dbReference type="InterPro" id="IPR036823">
    <property type="entry name" value="Ribosomal_uS7_dom_sf"/>
</dbReference>
<dbReference type="NCBIfam" id="TIGR01029">
    <property type="entry name" value="rpsG_bact"/>
    <property type="match status" value="1"/>
</dbReference>
<dbReference type="PANTHER" id="PTHR11205">
    <property type="entry name" value="RIBOSOMAL PROTEIN S7"/>
    <property type="match status" value="1"/>
</dbReference>
<dbReference type="Pfam" id="PF00177">
    <property type="entry name" value="Ribosomal_S7"/>
    <property type="match status" value="1"/>
</dbReference>
<dbReference type="PIRSF" id="PIRSF002122">
    <property type="entry name" value="RPS7p_RPS7a_RPS5e_RPS7o"/>
    <property type="match status" value="1"/>
</dbReference>
<dbReference type="SUPFAM" id="SSF47973">
    <property type="entry name" value="Ribosomal protein S7"/>
    <property type="match status" value="1"/>
</dbReference>
<dbReference type="PROSITE" id="PS00052">
    <property type="entry name" value="RIBOSOMAL_S7"/>
    <property type="match status" value="1"/>
</dbReference>